<reference key="1">
    <citation type="journal article" date="2013" name="Proc. Natl. Acad. Sci. U.S.A.">
        <title>Polynucleobacter necessarius, a model for genome reduction in both free-living and symbiotic bacteria.</title>
        <authorList>
            <person name="Boscaro V."/>
            <person name="Felletti M."/>
            <person name="Vannini C."/>
            <person name="Ackerman M.S."/>
            <person name="Chain P.S."/>
            <person name="Malfatti S."/>
            <person name="Vergez L.M."/>
            <person name="Shin M."/>
            <person name="Doak T.G."/>
            <person name="Lynch M."/>
            <person name="Petroni G."/>
        </authorList>
    </citation>
    <scope>NUCLEOTIDE SEQUENCE [LARGE SCALE GENOMIC DNA]</scope>
    <source>
        <strain>STIR1</strain>
    </source>
</reference>
<feature type="chain" id="PRO_1000095465" description="ATP phosphoribosyltransferase regulatory subunit">
    <location>
        <begin position="1"/>
        <end position="387"/>
    </location>
</feature>
<accession>B1XU84</accession>
<sequence>MNRWLLPEDITDVMPAEACKVESLRRAVLDLYQSYGYELVAPPILEFLDSLLTGTGSDLNLQTFKLVDQLSGRTLGLRADMTPQVARIDAHLLNRADVTRLCYAGSVAHARTPVGSSAREELQLGAEIYGCATWEADLEAITLLLKTLSVAGLEKVYLDLSHAGILAGILDGQSLDKETIEALYGLLQSKDRPRLGEWSTCLPENVAKALVALIELNGPCAEVLAKAKKELPKHAAIDKALADLERLVSAAANLSANVELSIDLADLRGYQYHSGVMFAAYVDRLPQPIARGGRYDHVGQAFGRPRPATGFSLDLLTLANLSPLNVRKMAITAPWVEDAELSKAIAALRDKGEVVIQVLAGTTLEAAEYQCDRELVKQGSSWEVKKK</sequence>
<keyword id="KW-0028">Amino-acid biosynthesis</keyword>
<keyword id="KW-0963">Cytoplasm</keyword>
<keyword id="KW-0368">Histidine biosynthesis</keyword>
<dbReference type="EMBL" id="CP001010">
    <property type="protein sequence ID" value="ACB43911.1"/>
    <property type="molecule type" value="Genomic_DNA"/>
</dbReference>
<dbReference type="SMR" id="B1XU84"/>
<dbReference type="STRING" id="452638.Pnec_0675"/>
<dbReference type="KEGG" id="pne:Pnec_0675"/>
<dbReference type="eggNOG" id="COG3705">
    <property type="taxonomic scope" value="Bacteria"/>
</dbReference>
<dbReference type="HOGENOM" id="CLU_025113_0_1_4"/>
<dbReference type="OrthoDB" id="9769617at2"/>
<dbReference type="UniPathway" id="UPA00031">
    <property type="reaction ID" value="UER00006"/>
</dbReference>
<dbReference type="GO" id="GO:0005737">
    <property type="term" value="C:cytoplasm"/>
    <property type="evidence" value="ECO:0007669"/>
    <property type="project" value="UniProtKB-SubCell"/>
</dbReference>
<dbReference type="GO" id="GO:0000105">
    <property type="term" value="P:L-histidine biosynthetic process"/>
    <property type="evidence" value="ECO:0007669"/>
    <property type="project" value="UniProtKB-UniRule"/>
</dbReference>
<dbReference type="CDD" id="cd00773">
    <property type="entry name" value="HisRS-like_core"/>
    <property type="match status" value="1"/>
</dbReference>
<dbReference type="Gene3D" id="3.30.930.10">
    <property type="entry name" value="Bira Bifunctional Protein, Domain 2"/>
    <property type="match status" value="1"/>
</dbReference>
<dbReference type="HAMAP" id="MF_00125">
    <property type="entry name" value="HisZ"/>
    <property type="match status" value="1"/>
</dbReference>
<dbReference type="InterPro" id="IPR045864">
    <property type="entry name" value="aa-tRNA-synth_II/BPL/LPL"/>
</dbReference>
<dbReference type="InterPro" id="IPR041715">
    <property type="entry name" value="HisRS-like_core"/>
</dbReference>
<dbReference type="InterPro" id="IPR004516">
    <property type="entry name" value="HisRS/HisZ"/>
</dbReference>
<dbReference type="InterPro" id="IPR004517">
    <property type="entry name" value="HisZ"/>
</dbReference>
<dbReference type="NCBIfam" id="TIGR00443">
    <property type="entry name" value="hisZ_biosyn_reg"/>
    <property type="match status" value="1"/>
</dbReference>
<dbReference type="NCBIfam" id="NF008935">
    <property type="entry name" value="PRK12292.1-1"/>
    <property type="match status" value="1"/>
</dbReference>
<dbReference type="NCBIfam" id="NF009086">
    <property type="entry name" value="PRK12421.1"/>
    <property type="match status" value="1"/>
</dbReference>
<dbReference type="PANTHER" id="PTHR11476:SF7">
    <property type="entry name" value="HISTIDINE--TRNA LIGASE"/>
    <property type="match status" value="1"/>
</dbReference>
<dbReference type="PANTHER" id="PTHR11476">
    <property type="entry name" value="HISTIDYL-TRNA SYNTHETASE"/>
    <property type="match status" value="1"/>
</dbReference>
<dbReference type="Pfam" id="PF13393">
    <property type="entry name" value="tRNA-synt_His"/>
    <property type="match status" value="1"/>
</dbReference>
<dbReference type="PIRSF" id="PIRSF001549">
    <property type="entry name" value="His-tRNA_synth"/>
    <property type="match status" value="1"/>
</dbReference>
<dbReference type="SUPFAM" id="SSF55681">
    <property type="entry name" value="Class II aaRS and biotin synthetases"/>
    <property type="match status" value="1"/>
</dbReference>
<evidence type="ECO:0000255" key="1">
    <source>
        <dbReference type="HAMAP-Rule" id="MF_00125"/>
    </source>
</evidence>
<protein>
    <recommendedName>
        <fullName evidence="1">ATP phosphoribosyltransferase regulatory subunit</fullName>
    </recommendedName>
</protein>
<proteinExistence type="inferred from homology"/>
<gene>
    <name evidence="1" type="primary">hisZ</name>
    <name type="ordered locus">Pnec_0675</name>
</gene>
<organism>
    <name type="scientific">Polynucleobacter necessarius subsp. necessarius (strain STIR1)</name>
    <dbReference type="NCBI Taxonomy" id="452638"/>
    <lineage>
        <taxon>Bacteria</taxon>
        <taxon>Pseudomonadati</taxon>
        <taxon>Pseudomonadota</taxon>
        <taxon>Betaproteobacteria</taxon>
        <taxon>Burkholderiales</taxon>
        <taxon>Burkholderiaceae</taxon>
        <taxon>Polynucleobacter</taxon>
    </lineage>
</organism>
<name>HISZ_POLNS</name>
<comment type="function">
    <text evidence="1">Required for the first step of histidine biosynthesis. May allow the feedback regulation of ATP phosphoribosyltransferase activity by histidine.</text>
</comment>
<comment type="pathway">
    <text evidence="1">Amino-acid biosynthesis; L-histidine biosynthesis; L-histidine from 5-phospho-alpha-D-ribose 1-diphosphate: step 1/9.</text>
</comment>
<comment type="subunit">
    <text evidence="1">Heteromultimer composed of HisG and HisZ subunits.</text>
</comment>
<comment type="subcellular location">
    <subcellularLocation>
        <location evidence="1">Cytoplasm</location>
    </subcellularLocation>
</comment>
<comment type="miscellaneous">
    <text>This function is generally fulfilled by the C-terminal part of HisG, which is missing in some bacteria such as this one.</text>
</comment>
<comment type="similarity">
    <text evidence="1">Belongs to the class-II aminoacyl-tRNA synthetase family. HisZ subfamily.</text>
</comment>